<sequence length="548" mass="62513">MLLDTLLELAGGINNVTRILAPQGQVVLALKHPPLVPHLPDDVSLQSVLGEWQLSVQRTAEVSDQQLAAIGKAIAERQKLETLPYQTALDCPYRPLWHISPPQGLLNDPNGFIYHQGEYHLFYQWHPFACEHKDKYWVHLKSLDLVDWQWQSVALTPSDWFDSHGVFSGHAVSHQQDLWLFYTGNTRLGVDRQRQTMQCAARMNANGEFEKLGPVIRCLPEGVTEHIRDPKVIYTQGKWQMLLGAQTLAHQGRLAVYHSDDLLHWHFDKLYGDELGDYGYMWECPDWFELQGEAFFVFGPQGIASANPHHTIEHQNRIFRATQNAQGEIALLQGWPLDEGFDFYAPQTAQTADGRRVLCGWMGLPDETQHPSCDQGWIHQLTALRELEWREGRIYQHPLRELDTLQSEPHTLLLSDNVTELKTKSFALQVTLPWGCELRLMQNTQYRVTLTLDAENQLLRLDRSATQIRQGDTIRELKLDSPTVELRILADQSSLEIFINQGEHVMTSRIFTPRDASGISLHGASVDAKLYYMAPASAPFNLEVNVQP</sequence>
<dbReference type="EC" id="3.2.1.26"/>
<dbReference type="EMBL" id="AE003853">
    <property type="protein sequence ID" value="AAF96556.1"/>
    <property type="molecule type" value="Genomic_DNA"/>
</dbReference>
<dbReference type="PIR" id="H82432">
    <property type="entry name" value="H82432"/>
</dbReference>
<dbReference type="RefSeq" id="NP_233044.1">
    <property type="nucleotide sequence ID" value="NC_002506.1"/>
</dbReference>
<dbReference type="RefSeq" id="WP_000923309.1">
    <property type="nucleotide sequence ID" value="NZ_LT906615.1"/>
</dbReference>
<dbReference type="SMR" id="Q9KLT6"/>
<dbReference type="STRING" id="243277.VC_A0655"/>
<dbReference type="CAZy" id="GH32">
    <property type="family name" value="Glycoside Hydrolase Family 32"/>
</dbReference>
<dbReference type="DNASU" id="2612580"/>
<dbReference type="EnsemblBacteria" id="AAF96556">
    <property type="protein sequence ID" value="AAF96556"/>
    <property type="gene ID" value="VC_A0655"/>
</dbReference>
<dbReference type="KEGG" id="vch:VC_A0655"/>
<dbReference type="PATRIC" id="fig|243277.26.peg.3283"/>
<dbReference type="eggNOG" id="COG1621">
    <property type="taxonomic scope" value="Bacteria"/>
</dbReference>
<dbReference type="HOGENOM" id="CLU_001528_7_1_6"/>
<dbReference type="UniPathway" id="UPA00238"/>
<dbReference type="Proteomes" id="UP000000584">
    <property type="component" value="Chromosome 2"/>
</dbReference>
<dbReference type="GO" id="GO:0005737">
    <property type="term" value="C:cytoplasm"/>
    <property type="evidence" value="ECO:0007669"/>
    <property type="project" value="UniProtKB-SubCell"/>
</dbReference>
<dbReference type="GO" id="GO:0004564">
    <property type="term" value="F:beta-fructofuranosidase activity"/>
    <property type="evidence" value="ECO:0007669"/>
    <property type="project" value="UniProtKB-EC"/>
</dbReference>
<dbReference type="GO" id="GO:0005985">
    <property type="term" value="P:sucrose metabolic process"/>
    <property type="evidence" value="ECO:0007669"/>
    <property type="project" value="UniProtKB-UniPathway"/>
</dbReference>
<dbReference type="CDD" id="cd18623">
    <property type="entry name" value="GH32_ScrB-like"/>
    <property type="match status" value="1"/>
</dbReference>
<dbReference type="FunFam" id="2.115.10.20:FF:000012">
    <property type="entry name" value="Probable sucrose-6-phosphate hydrolase"/>
    <property type="match status" value="1"/>
</dbReference>
<dbReference type="FunFam" id="2.60.120.560:FF:000008">
    <property type="entry name" value="Sucrose-6-phosphate hydrolase"/>
    <property type="match status" value="1"/>
</dbReference>
<dbReference type="Gene3D" id="2.60.120.560">
    <property type="entry name" value="Exo-inulinase, domain 1"/>
    <property type="match status" value="1"/>
</dbReference>
<dbReference type="Gene3D" id="2.115.10.20">
    <property type="entry name" value="Glycosyl hydrolase domain, family 43"/>
    <property type="match status" value="1"/>
</dbReference>
<dbReference type="InterPro" id="IPR013320">
    <property type="entry name" value="ConA-like_dom_sf"/>
</dbReference>
<dbReference type="InterPro" id="IPR051214">
    <property type="entry name" value="GH32_Enzymes"/>
</dbReference>
<dbReference type="InterPro" id="IPR001362">
    <property type="entry name" value="Glyco_hydro_32"/>
</dbReference>
<dbReference type="InterPro" id="IPR018053">
    <property type="entry name" value="Glyco_hydro_32_AS"/>
</dbReference>
<dbReference type="InterPro" id="IPR013189">
    <property type="entry name" value="Glyco_hydro_32_C"/>
</dbReference>
<dbReference type="InterPro" id="IPR013148">
    <property type="entry name" value="Glyco_hydro_32_N"/>
</dbReference>
<dbReference type="InterPro" id="IPR023296">
    <property type="entry name" value="Glyco_hydro_beta-prop_sf"/>
</dbReference>
<dbReference type="InterPro" id="IPR006232">
    <property type="entry name" value="Suc6P_hydrolase"/>
</dbReference>
<dbReference type="NCBIfam" id="TIGR01322">
    <property type="entry name" value="scrB_fam"/>
    <property type="match status" value="1"/>
</dbReference>
<dbReference type="PANTHER" id="PTHR43101">
    <property type="entry name" value="BETA-FRUCTOSIDASE"/>
    <property type="match status" value="1"/>
</dbReference>
<dbReference type="PANTHER" id="PTHR43101:SF1">
    <property type="entry name" value="BETA-FRUCTOSIDASE"/>
    <property type="match status" value="1"/>
</dbReference>
<dbReference type="Pfam" id="PF08244">
    <property type="entry name" value="Glyco_hydro_32C"/>
    <property type="match status" value="1"/>
</dbReference>
<dbReference type="Pfam" id="PF00251">
    <property type="entry name" value="Glyco_hydro_32N"/>
    <property type="match status" value="1"/>
</dbReference>
<dbReference type="SMART" id="SM00640">
    <property type="entry name" value="Glyco_32"/>
    <property type="match status" value="1"/>
</dbReference>
<dbReference type="SUPFAM" id="SSF75005">
    <property type="entry name" value="Arabinanase/levansucrase/invertase"/>
    <property type="match status" value="1"/>
</dbReference>
<dbReference type="SUPFAM" id="SSF49899">
    <property type="entry name" value="Concanavalin A-like lectins/glucanases"/>
    <property type="match status" value="1"/>
</dbReference>
<dbReference type="PROSITE" id="PS00609">
    <property type="entry name" value="GLYCOSYL_HYDROL_F32"/>
    <property type="match status" value="1"/>
</dbReference>
<comment type="function">
    <text evidence="1">Enables the bacterium to metabolize sucrose as a sole carbon source.</text>
</comment>
<comment type="catalytic activity">
    <reaction evidence="2">
        <text>Hydrolysis of terminal non-reducing beta-D-fructofuranoside residues in beta-D-fructofuranosides.</text>
        <dbReference type="EC" id="3.2.1.26"/>
    </reaction>
</comment>
<comment type="pathway">
    <text>Glycan biosynthesis; sucrose metabolism.</text>
</comment>
<comment type="subcellular location">
    <subcellularLocation>
        <location evidence="1">Cytoplasm</location>
    </subcellularLocation>
</comment>
<comment type="similarity">
    <text evidence="3">Belongs to the glycosyl hydrolase 32 family.</text>
</comment>
<gene>
    <name type="ordered locus">VC_A0655</name>
</gene>
<reference key="1">
    <citation type="journal article" date="2000" name="Nature">
        <title>DNA sequence of both chromosomes of the cholera pathogen Vibrio cholerae.</title>
        <authorList>
            <person name="Heidelberg J.F."/>
            <person name="Eisen J.A."/>
            <person name="Nelson W.C."/>
            <person name="Clayton R.A."/>
            <person name="Gwinn M.L."/>
            <person name="Dodson R.J."/>
            <person name="Haft D.H."/>
            <person name="Hickey E.K."/>
            <person name="Peterson J.D."/>
            <person name="Umayam L.A."/>
            <person name="Gill S.R."/>
            <person name="Nelson K.E."/>
            <person name="Read T.D."/>
            <person name="Tettelin H."/>
            <person name="Richardson D.L."/>
            <person name="Ermolaeva M.D."/>
            <person name="Vamathevan J.J."/>
            <person name="Bass S."/>
            <person name="Qin H."/>
            <person name="Dragoi I."/>
            <person name="Sellers P."/>
            <person name="McDonald L.A."/>
            <person name="Utterback T.R."/>
            <person name="Fleischmann R.D."/>
            <person name="Nierman W.C."/>
            <person name="White O."/>
            <person name="Salzberg S.L."/>
            <person name="Smith H.O."/>
            <person name="Colwell R.R."/>
            <person name="Mekalanos J.J."/>
            <person name="Venter J.C."/>
            <person name="Fraser C.M."/>
        </authorList>
    </citation>
    <scope>NUCLEOTIDE SEQUENCE [LARGE SCALE GENOMIC DNA]</scope>
    <source>
        <strain>ATCC 39315 / El Tor Inaba N16961</strain>
    </source>
</reference>
<protein>
    <recommendedName>
        <fullName>Probable sucrose-6-phosphate hydrolase</fullName>
        <shortName>Sucrase</shortName>
        <ecNumber>3.2.1.26</ecNumber>
    </recommendedName>
    <alternativeName>
        <fullName>Invertase</fullName>
    </alternativeName>
</protein>
<evidence type="ECO:0000250" key="1"/>
<evidence type="ECO:0000255" key="2">
    <source>
        <dbReference type="PROSITE-ProRule" id="PRU10067"/>
    </source>
</evidence>
<evidence type="ECO:0000305" key="3"/>
<name>SCRB_VIBCH</name>
<feature type="chain" id="PRO_0000341297" description="Probable sucrose-6-phosphate hydrolase">
    <location>
        <begin position="1"/>
        <end position="548"/>
    </location>
</feature>
<feature type="active site" evidence="2">
    <location>
        <position position="108"/>
    </location>
</feature>
<feature type="binding site" evidence="1">
    <location>
        <begin position="105"/>
        <end position="108"/>
    </location>
    <ligand>
        <name>substrate</name>
    </ligand>
</feature>
<feature type="binding site" evidence="1">
    <location>
        <position position="124"/>
    </location>
    <ligand>
        <name>substrate</name>
    </ligand>
</feature>
<feature type="binding site" evidence="1">
    <location>
        <begin position="167"/>
        <end position="168"/>
    </location>
    <ligand>
        <name>substrate</name>
    </ligand>
</feature>
<feature type="binding site" evidence="1">
    <location>
        <begin position="228"/>
        <end position="229"/>
    </location>
    <ligand>
        <name>substrate</name>
    </ligand>
</feature>
<feature type="binding site" evidence="1">
    <location>
        <position position="283"/>
    </location>
    <ligand>
        <name>substrate</name>
    </ligand>
</feature>
<keyword id="KW-0963">Cytoplasm</keyword>
<keyword id="KW-0326">Glycosidase</keyword>
<keyword id="KW-0378">Hydrolase</keyword>
<keyword id="KW-1185">Reference proteome</keyword>
<proteinExistence type="inferred from homology"/>
<accession>Q9KLT6</accession>
<organism>
    <name type="scientific">Vibrio cholerae serotype O1 (strain ATCC 39315 / El Tor Inaba N16961)</name>
    <dbReference type="NCBI Taxonomy" id="243277"/>
    <lineage>
        <taxon>Bacteria</taxon>
        <taxon>Pseudomonadati</taxon>
        <taxon>Pseudomonadota</taxon>
        <taxon>Gammaproteobacteria</taxon>
        <taxon>Vibrionales</taxon>
        <taxon>Vibrionaceae</taxon>
        <taxon>Vibrio</taxon>
    </lineage>
</organism>